<comment type="similarity">
    <text evidence="1">Belongs to the bacterial ribosomal protein bS21 family.</text>
</comment>
<gene>
    <name evidence="1" type="primary">rpsU</name>
    <name type="ordered locus">Nwi_0999</name>
</gene>
<keyword id="KW-1185">Reference proteome</keyword>
<keyword id="KW-0687">Ribonucleoprotein</keyword>
<keyword id="KW-0689">Ribosomal protein</keyword>
<proteinExistence type="inferred from homology"/>
<reference key="1">
    <citation type="journal article" date="2006" name="Appl. Environ. Microbiol.">
        <title>Genome sequence of the chemolithoautotrophic nitrite-oxidizing bacterium Nitrobacter winogradskyi Nb-255.</title>
        <authorList>
            <person name="Starkenburg S.R."/>
            <person name="Chain P.S.G."/>
            <person name="Sayavedra-Soto L.A."/>
            <person name="Hauser L."/>
            <person name="Land M.L."/>
            <person name="Larimer F.W."/>
            <person name="Malfatti S.A."/>
            <person name="Klotz M.G."/>
            <person name="Bottomley P.J."/>
            <person name="Arp D.J."/>
            <person name="Hickey W.J."/>
        </authorList>
    </citation>
    <scope>NUCLEOTIDE SEQUENCE [LARGE SCALE GENOMIC DNA]</scope>
    <source>
        <strain>ATCC 25391 / DSM 10237 / CIP 104748 / NCIMB 11846 / Nb-255</strain>
    </source>
</reference>
<feature type="chain" id="PRO_0000266714" description="Small ribosomal subunit protein bS21">
    <location>
        <begin position="1"/>
        <end position="95"/>
    </location>
</feature>
<feature type="region of interest" description="Disordered" evidence="2">
    <location>
        <begin position="56"/>
        <end position="95"/>
    </location>
</feature>
<feature type="compositionally biased region" description="Gly residues" evidence="2">
    <location>
        <begin position="78"/>
        <end position="88"/>
    </location>
</feature>
<name>RS21_NITWN</name>
<organism>
    <name type="scientific">Nitrobacter winogradskyi (strain ATCC 25391 / DSM 10237 / CIP 104748 / NCIMB 11846 / Nb-255)</name>
    <dbReference type="NCBI Taxonomy" id="323098"/>
    <lineage>
        <taxon>Bacteria</taxon>
        <taxon>Pseudomonadati</taxon>
        <taxon>Pseudomonadota</taxon>
        <taxon>Alphaproteobacteria</taxon>
        <taxon>Hyphomicrobiales</taxon>
        <taxon>Nitrobacteraceae</taxon>
        <taxon>Nitrobacter</taxon>
    </lineage>
</organism>
<sequence length="95" mass="10643">MQVLVRDNNVDQALKALKKKMQREGIFREMKLRGHYEKPSEKKAREKAEAVRRARKLARKKMQREGLLPMKPKPVFGAGPGAGRGGPAAGPRGPR</sequence>
<dbReference type="EMBL" id="CP000115">
    <property type="protein sequence ID" value="ABA04261.1"/>
    <property type="molecule type" value="Genomic_DNA"/>
</dbReference>
<dbReference type="RefSeq" id="WP_009799172.1">
    <property type="nucleotide sequence ID" value="NC_007406.1"/>
</dbReference>
<dbReference type="SMR" id="Q3STY0"/>
<dbReference type="STRING" id="323098.Nwi_0999"/>
<dbReference type="KEGG" id="nwi:Nwi_0999"/>
<dbReference type="eggNOG" id="COG0828">
    <property type="taxonomic scope" value="Bacteria"/>
</dbReference>
<dbReference type="HOGENOM" id="CLU_159258_0_1_5"/>
<dbReference type="OrthoDB" id="9811907at2"/>
<dbReference type="Proteomes" id="UP000002531">
    <property type="component" value="Chromosome"/>
</dbReference>
<dbReference type="GO" id="GO:1990904">
    <property type="term" value="C:ribonucleoprotein complex"/>
    <property type="evidence" value="ECO:0007669"/>
    <property type="project" value="UniProtKB-KW"/>
</dbReference>
<dbReference type="GO" id="GO:0005840">
    <property type="term" value="C:ribosome"/>
    <property type="evidence" value="ECO:0007669"/>
    <property type="project" value="UniProtKB-KW"/>
</dbReference>
<dbReference type="GO" id="GO:0003735">
    <property type="term" value="F:structural constituent of ribosome"/>
    <property type="evidence" value="ECO:0007669"/>
    <property type="project" value="InterPro"/>
</dbReference>
<dbReference type="GO" id="GO:0006412">
    <property type="term" value="P:translation"/>
    <property type="evidence" value="ECO:0007669"/>
    <property type="project" value="UniProtKB-UniRule"/>
</dbReference>
<dbReference type="Gene3D" id="1.20.5.1150">
    <property type="entry name" value="Ribosomal protein S8"/>
    <property type="match status" value="1"/>
</dbReference>
<dbReference type="HAMAP" id="MF_00358">
    <property type="entry name" value="Ribosomal_bS21"/>
    <property type="match status" value="1"/>
</dbReference>
<dbReference type="InterPro" id="IPR001911">
    <property type="entry name" value="Ribosomal_bS21"/>
</dbReference>
<dbReference type="InterPro" id="IPR018278">
    <property type="entry name" value="Ribosomal_bS21_CS"/>
</dbReference>
<dbReference type="InterPro" id="IPR038380">
    <property type="entry name" value="Ribosomal_bS21_sf"/>
</dbReference>
<dbReference type="NCBIfam" id="TIGR00030">
    <property type="entry name" value="S21p"/>
    <property type="match status" value="1"/>
</dbReference>
<dbReference type="PANTHER" id="PTHR21109">
    <property type="entry name" value="MITOCHONDRIAL 28S RIBOSOMAL PROTEIN S21"/>
    <property type="match status" value="1"/>
</dbReference>
<dbReference type="PANTHER" id="PTHR21109:SF0">
    <property type="entry name" value="SMALL RIBOSOMAL SUBUNIT PROTEIN BS21M"/>
    <property type="match status" value="1"/>
</dbReference>
<dbReference type="Pfam" id="PF01165">
    <property type="entry name" value="Ribosomal_S21"/>
    <property type="match status" value="1"/>
</dbReference>
<dbReference type="PROSITE" id="PS01181">
    <property type="entry name" value="RIBOSOMAL_S21"/>
    <property type="match status" value="1"/>
</dbReference>
<evidence type="ECO:0000255" key="1">
    <source>
        <dbReference type="HAMAP-Rule" id="MF_00358"/>
    </source>
</evidence>
<evidence type="ECO:0000256" key="2">
    <source>
        <dbReference type="SAM" id="MobiDB-lite"/>
    </source>
</evidence>
<evidence type="ECO:0000305" key="3"/>
<accession>Q3STY0</accession>
<protein>
    <recommendedName>
        <fullName evidence="1">Small ribosomal subunit protein bS21</fullName>
    </recommendedName>
    <alternativeName>
        <fullName evidence="3">30S ribosomal protein S21</fullName>
    </alternativeName>
</protein>